<protein>
    <recommendedName>
        <fullName evidence="1">Valine--tRNA ligase</fullName>
        <ecNumber evidence="1">6.1.1.9</ecNumber>
    </recommendedName>
    <alternativeName>
        <fullName evidence="1">Valyl-tRNA synthetase</fullName>
        <shortName evidence="1">ValRS</shortName>
    </alternativeName>
</protein>
<proteinExistence type="inferred from homology"/>
<reference key="1">
    <citation type="journal article" date="2000" name="Nature">
        <title>Genome sequence of the endocellular bacterial symbiont of aphids Buchnera sp. APS.</title>
        <authorList>
            <person name="Shigenobu S."/>
            <person name="Watanabe H."/>
            <person name="Hattori M."/>
            <person name="Sakaki Y."/>
            <person name="Ishikawa H."/>
        </authorList>
    </citation>
    <scope>NUCLEOTIDE SEQUENCE [LARGE SCALE GENOMIC DNA]</scope>
    <source>
        <strain>APS</strain>
    </source>
</reference>
<organism>
    <name type="scientific">Buchnera aphidicola subsp. Acyrthosiphon pisum (strain APS)</name>
    <name type="common">Acyrthosiphon pisum symbiotic bacterium</name>
    <dbReference type="NCBI Taxonomy" id="107806"/>
    <lineage>
        <taxon>Bacteria</taxon>
        <taxon>Pseudomonadati</taxon>
        <taxon>Pseudomonadota</taxon>
        <taxon>Gammaproteobacteria</taxon>
        <taxon>Enterobacterales</taxon>
        <taxon>Erwiniaceae</taxon>
        <taxon>Buchnera</taxon>
    </lineage>
</organism>
<accession>P57447</accession>
<feature type="chain" id="PRO_0000106216" description="Valine--tRNA ligase">
    <location>
        <begin position="1"/>
        <end position="955"/>
    </location>
</feature>
<feature type="coiled-coil region" evidence="1">
    <location>
        <begin position="926"/>
        <end position="946"/>
    </location>
</feature>
<feature type="short sequence motif" description="'HIGH' region">
    <location>
        <begin position="41"/>
        <end position="51"/>
    </location>
</feature>
<feature type="short sequence motif" description="'KMSKS' region">
    <location>
        <begin position="554"/>
        <end position="558"/>
    </location>
</feature>
<feature type="binding site" evidence="1">
    <location>
        <position position="557"/>
    </location>
    <ligand>
        <name>ATP</name>
        <dbReference type="ChEBI" id="CHEBI:30616"/>
    </ligand>
</feature>
<evidence type="ECO:0000255" key="1">
    <source>
        <dbReference type="HAMAP-Rule" id="MF_02004"/>
    </source>
</evidence>
<comment type="function">
    <text evidence="1">Catalyzes the attachment of valine to tRNA(Val). As ValRS can inadvertently accommodate and process structurally similar amino acids such as threonine, to avoid such errors, it has a 'posttransfer' editing activity that hydrolyzes mischarged Thr-tRNA(Val) in a tRNA-dependent manner.</text>
</comment>
<comment type="catalytic activity">
    <reaction evidence="1">
        <text>tRNA(Val) + L-valine + ATP = L-valyl-tRNA(Val) + AMP + diphosphate</text>
        <dbReference type="Rhea" id="RHEA:10704"/>
        <dbReference type="Rhea" id="RHEA-COMP:9672"/>
        <dbReference type="Rhea" id="RHEA-COMP:9708"/>
        <dbReference type="ChEBI" id="CHEBI:30616"/>
        <dbReference type="ChEBI" id="CHEBI:33019"/>
        <dbReference type="ChEBI" id="CHEBI:57762"/>
        <dbReference type="ChEBI" id="CHEBI:78442"/>
        <dbReference type="ChEBI" id="CHEBI:78537"/>
        <dbReference type="ChEBI" id="CHEBI:456215"/>
        <dbReference type="EC" id="6.1.1.9"/>
    </reaction>
</comment>
<comment type="subunit">
    <text evidence="1">Monomer.</text>
</comment>
<comment type="subcellular location">
    <subcellularLocation>
        <location evidence="1">Cytoplasm</location>
    </subcellularLocation>
</comment>
<comment type="domain">
    <text evidence="1">ValRS has two distinct active sites: one for aminoacylation and one for editing. The misactivated threonine is translocated from the active site to the editing site.</text>
</comment>
<comment type="domain">
    <text evidence="1">The C-terminal coiled-coil domain is crucial for aminoacylation activity.</text>
</comment>
<comment type="similarity">
    <text evidence="1">Belongs to the class-I aminoacyl-tRNA synthetase family. ValS type 1 subfamily.</text>
</comment>
<dbReference type="EC" id="6.1.1.9" evidence="1"/>
<dbReference type="EMBL" id="BA000003">
    <property type="protein sequence ID" value="BAB13070.1"/>
    <property type="molecule type" value="Genomic_DNA"/>
</dbReference>
<dbReference type="RefSeq" id="NP_240184.1">
    <property type="nucleotide sequence ID" value="NC_002528.1"/>
</dbReference>
<dbReference type="RefSeq" id="WP_010896088.1">
    <property type="nucleotide sequence ID" value="NZ_AP036055.1"/>
</dbReference>
<dbReference type="SMR" id="P57447"/>
<dbReference type="STRING" id="563178.BUAP5A_359"/>
<dbReference type="EnsemblBacteria" id="BAB13070">
    <property type="protein sequence ID" value="BAB13070"/>
    <property type="gene ID" value="BAB13070"/>
</dbReference>
<dbReference type="KEGG" id="buc:BU366"/>
<dbReference type="PATRIC" id="fig|107806.10.peg.380"/>
<dbReference type="eggNOG" id="COG0525">
    <property type="taxonomic scope" value="Bacteria"/>
</dbReference>
<dbReference type="HOGENOM" id="CLU_001493_0_2_6"/>
<dbReference type="Proteomes" id="UP000001806">
    <property type="component" value="Chromosome"/>
</dbReference>
<dbReference type="GO" id="GO:0005829">
    <property type="term" value="C:cytosol"/>
    <property type="evidence" value="ECO:0007669"/>
    <property type="project" value="TreeGrafter"/>
</dbReference>
<dbReference type="GO" id="GO:0002161">
    <property type="term" value="F:aminoacyl-tRNA deacylase activity"/>
    <property type="evidence" value="ECO:0007669"/>
    <property type="project" value="InterPro"/>
</dbReference>
<dbReference type="GO" id="GO:0005524">
    <property type="term" value="F:ATP binding"/>
    <property type="evidence" value="ECO:0007669"/>
    <property type="project" value="UniProtKB-UniRule"/>
</dbReference>
<dbReference type="GO" id="GO:0004832">
    <property type="term" value="F:valine-tRNA ligase activity"/>
    <property type="evidence" value="ECO:0007669"/>
    <property type="project" value="UniProtKB-UniRule"/>
</dbReference>
<dbReference type="GO" id="GO:0006438">
    <property type="term" value="P:valyl-tRNA aminoacylation"/>
    <property type="evidence" value="ECO:0007669"/>
    <property type="project" value="UniProtKB-UniRule"/>
</dbReference>
<dbReference type="CDD" id="cd07962">
    <property type="entry name" value="Anticodon_Ia_Val"/>
    <property type="match status" value="1"/>
</dbReference>
<dbReference type="CDD" id="cd00817">
    <property type="entry name" value="ValRS_core"/>
    <property type="match status" value="1"/>
</dbReference>
<dbReference type="FunFam" id="3.40.50.620:FF:000032">
    <property type="entry name" value="Valine--tRNA ligase"/>
    <property type="match status" value="1"/>
</dbReference>
<dbReference type="FunFam" id="3.40.50.620:FF:000073">
    <property type="entry name" value="Valine--tRNA ligase"/>
    <property type="match status" value="1"/>
</dbReference>
<dbReference type="Gene3D" id="3.40.50.620">
    <property type="entry name" value="HUPs"/>
    <property type="match status" value="2"/>
</dbReference>
<dbReference type="Gene3D" id="1.10.730.10">
    <property type="entry name" value="Isoleucyl-tRNA Synthetase, Domain 1"/>
    <property type="match status" value="1"/>
</dbReference>
<dbReference type="Gene3D" id="1.10.287.380">
    <property type="entry name" value="Valyl-tRNA synthetase, C-terminal domain"/>
    <property type="match status" value="1"/>
</dbReference>
<dbReference type="Gene3D" id="3.90.740.10">
    <property type="entry name" value="Valyl/Leucyl/Isoleucyl-tRNA synthetase, editing domain"/>
    <property type="match status" value="1"/>
</dbReference>
<dbReference type="HAMAP" id="MF_02004">
    <property type="entry name" value="Val_tRNA_synth_type1"/>
    <property type="match status" value="1"/>
</dbReference>
<dbReference type="InterPro" id="IPR001412">
    <property type="entry name" value="aa-tRNA-synth_I_CS"/>
</dbReference>
<dbReference type="InterPro" id="IPR002300">
    <property type="entry name" value="aa-tRNA-synth_Ia"/>
</dbReference>
<dbReference type="InterPro" id="IPR033705">
    <property type="entry name" value="Anticodon_Ia_Val"/>
</dbReference>
<dbReference type="InterPro" id="IPR013155">
    <property type="entry name" value="M/V/L/I-tRNA-synth_anticd-bd"/>
</dbReference>
<dbReference type="InterPro" id="IPR014729">
    <property type="entry name" value="Rossmann-like_a/b/a_fold"/>
</dbReference>
<dbReference type="InterPro" id="IPR010978">
    <property type="entry name" value="tRNA-bd_arm"/>
</dbReference>
<dbReference type="InterPro" id="IPR009080">
    <property type="entry name" value="tRNAsynth_Ia_anticodon-bd"/>
</dbReference>
<dbReference type="InterPro" id="IPR037118">
    <property type="entry name" value="Val-tRNA_synth_C_sf"/>
</dbReference>
<dbReference type="InterPro" id="IPR009008">
    <property type="entry name" value="Val/Leu/Ile-tRNA-synth_edit"/>
</dbReference>
<dbReference type="InterPro" id="IPR002303">
    <property type="entry name" value="Valyl-tRNA_ligase"/>
</dbReference>
<dbReference type="NCBIfam" id="NF004349">
    <property type="entry name" value="PRK05729.1"/>
    <property type="match status" value="1"/>
</dbReference>
<dbReference type="NCBIfam" id="TIGR00422">
    <property type="entry name" value="valS"/>
    <property type="match status" value="1"/>
</dbReference>
<dbReference type="PANTHER" id="PTHR11946:SF93">
    <property type="entry name" value="VALINE--TRNA LIGASE, CHLOROPLASTIC_MITOCHONDRIAL 2"/>
    <property type="match status" value="1"/>
</dbReference>
<dbReference type="PANTHER" id="PTHR11946">
    <property type="entry name" value="VALYL-TRNA SYNTHETASES"/>
    <property type="match status" value="1"/>
</dbReference>
<dbReference type="Pfam" id="PF08264">
    <property type="entry name" value="Anticodon_1"/>
    <property type="match status" value="1"/>
</dbReference>
<dbReference type="Pfam" id="PF00133">
    <property type="entry name" value="tRNA-synt_1"/>
    <property type="match status" value="1"/>
</dbReference>
<dbReference type="PRINTS" id="PR00986">
    <property type="entry name" value="TRNASYNTHVAL"/>
</dbReference>
<dbReference type="SUPFAM" id="SSF47323">
    <property type="entry name" value="Anticodon-binding domain of a subclass of class I aminoacyl-tRNA synthetases"/>
    <property type="match status" value="1"/>
</dbReference>
<dbReference type="SUPFAM" id="SSF52374">
    <property type="entry name" value="Nucleotidylyl transferase"/>
    <property type="match status" value="1"/>
</dbReference>
<dbReference type="SUPFAM" id="SSF46589">
    <property type="entry name" value="tRNA-binding arm"/>
    <property type="match status" value="1"/>
</dbReference>
<dbReference type="SUPFAM" id="SSF50677">
    <property type="entry name" value="ValRS/IleRS/LeuRS editing domain"/>
    <property type="match status" value="1"/>
</dbReference>
<dbReference type="PROSITE" id="PS00178">
    <property type="entry name" value="AA_TRNA_LIGASE_I"/>
    <property type="match status" value="1"/>
</dbReference>
<keyword id="KW-0030">Aminoacyl-tRNA synthetase</keyword>
<keyword id="KW-0067">ATP-binding</keyword>
<keyword id="KW-0175">Coiled coil</keyword>
<keyword id="KW-0963">Cytoplasm</keyword>
<keyword id="KW-0436">Ligase</keyword>
<keyword id="KW-0547">Nucleotide-binding</keyword>
<keyword id="KW-0648">Protein biosynthesis</keyword>
<keyword id="KW-1185">Reference proteome</keyword>
<sequence>MEKIYNPKHIEESLYFFWEKNGFFKPNHLEKSTFCIMMPPPNITGSLHMGHAFQQTIMDILIRYHRMQGKNTFWQVGTDHAGIATQILVERQIFEKEQKTKKDYSRDDFIKKIWEWKKQSSNIITKQMRRLGISVDWDYEKFTLDPDISNSVREAFIILYKNNLIYQKKKLVHWDSKLETVISDLEVEHRLIKGKKWFIRYPIIENDMSLRSKVKYLIVSTTRPETLLGDTAIAVNPEDYKYNQFIGNHVSCPLTNRIIPIIKDRYADLEKGTGCVKITPAHDFNDYKVGLHHKLPMINIFTFDGRIKSTAEVYNYKGEKSNQYSTCIPMQFQHLDILSARIEIIKEITKLGFLEKIEECNVTVPYSERSGVIIEPMLTNQWYLKTSTLAKVALNAVKDKKIKFIPQQYESMYSSWMNNIEDWCISRQLWWGHRIPVWYDDQKNIYIGQNEKEIRQAYSISENVLLKQENDVLDTWFSSGLWTFSSLGWPKKTTFLKTFHPTNVLVSGFDIIFFWIARMIMLTMYFMKDKHNNPEVPFKNIYITGLIRDEFGKKMSKSKGNVIDPLDMIDGISLSELIKKRTNNLLQPNLSDKIIQRTIKQFPEGIKSTGTDALRFTFSALASSTRDIQWDMNRLKGYRNFCNKLWNASRFVLINTQDHNFSKFDVKRKMLLINKWILIEFNNTVKLYRESLDTYRFDIAANILYDFIWNIFCDWYLEFVKIVIKLGSSKEVYCTKNVLVYVLELLLKLAHPIMPFITETIWQRIKLIQNISEKTIMLQDFPEYNHKLFDKKILVQMNWMKKIIVFLRNIRTNMNVSSTKLLPLFLYNINSEQEKVIKENISLIKNISFLDKITILSEKYDKDLCIKEIIDGAEIIIPILKLVDTKVELKRLVKEQKKTELNIFKIKTKILNKDFLSYAPTKIVTQEKNKLLKLNEINLKLSEQIKIFRNMSYKK</sequence>
<gene>
    <name evidence="1" type="primary">valS</name>
    <name type="ordered locus">BU366</name>
</gene>
<name>SYV_BUCAI</name>